<name>TRHO_ECO27</name>
<evidence type="ECO:0000250" key="1">
    <source>
        <dbReference type="UniProtKB" id="P24188"/>
    </source>
</evidence>
<evidence type="ECO:0000255" key="2">
    <source>
        <dbReference type="HAMAP-Rule" id="MF_00469"/>
    </source>
</evidence>
<accession>B7UP69</accession>
<keyword id="KW-0560">Oxidoreductase</keyword>
<keyword id="KW-1185">Reference proteome</keyword>
<keyword id="KW-0819">tRNA processing</keyword>
<comment type="function">
    <text evidence="1">Catalyzes oxygen-dependent 5-hydroxyuridine (ho5U) modification at position 34 in tRNAs, the first step in 5-carboxymethoxyuridine (cmo5U) biosynthesis. May be part of an alternate pathway, which is able to bypass cmo5U biogenesis in a subset of tRNAs under aerobic conditions.</text>
</comment>
<comment type="catalytic activity">
    <reaction evidence="2">
        <text>uridine(34) in tRNA + AH2 + O2 = 5-hydroxyuridine(34) in tRNA + A + H2O</text>
        <dbReference type="Rhea" id="RHEA:64224"/>
        <dbReference type="Rhea" id="RHEA-COMP:11727"/>
        <dbReference type="Rhea" id="RHEA-COMP:13381"/>
        <dbReference type="ChEBI" id="CHEBI:13193"/>
        <dbReference type="ChEBI" id="CHEBI:15377"/>
        <dbReference type="ChEBI" id="CHEBI:15379"/>
        <dbReference type="ChEBI" id="CHEBI:17499"/>
        <dbReference type="ChEBI" id="CHEBI:65315"/>
        <dbReference type="ChEBI" id="CHEBI:136877"/>
    </reaction>
</comment>
<comment type="similarity">
    <text evidence="2">Belongs to the TrhO family.</text>
</comment>
<feature type="chain" id="PRO_1000135469" description="tRNA uridine(34) hydroxylase">
    <location>
        <begin position="1"/>
        <end position="350"/>
    </location>
</feature>
<feature type="domain" description="Rhodanese" evidence="2">
    <location>
        <begin position="146"/>
        <end position="240"/>
    </location>
</feature>
<feature type="active site" description="Cysteine persulfide intermediate" evidence="2">
    <location>
        <position position="200"/>
    </location>
</feature>
<gene>
    <name evidence="2" type="primary">trhO</name>
    <name type="synonym">yceA</name>
    <name type="ordered locus">E2348C_1145</name>
</gene>
<dbReference type="EC" id="1.14.-.-" evidence="2"/>
<dbReference type="EMBL" id="FM180568">
    <property type="protein sequence ID" value="CAS08693.1"/>
    <property type="molecule type" value="Genomic_DNA"/>
</dbReference>
<dbReference type="RefSeq" id="WP_012578880.1">
    <property type="nucleotide sequence ID" value="NC_011601.1"/>
</dbReference>
<dbReference type="SMR" id="B7UP69"/>
<dbReference type="KEGG" id="ecg:E2348C_1145"/>
<dbReference type="HOGENOM" id="CLU_038878_1_1_6"/>
<dbReference type="Proteomes" id="UP000008205">
    <property type="component" value="Chromosome"/>
</dbReference>
<dbReference type="GO" id="GO:0016705">
    <property type="term" value="F:oxidoreductase activity, acting on paired donors, with incorporation or reduction of molecular oxygen"/>
    <property type="evidence" value="ECO:0007669"/>
    <property type="project" value="UniProtKB-UniRule"/>
</dbReference>
<dbReference type="GO" id="GO:0006400">
    <property type="term" value="P:tRNA modification"/>
    <property type="evidence" value="ECO:0007669"/>
    <property type="project" value="UniProtKB-UniRule"/>
</dbReference>
<dbReference type="CDD" id="cd01518">
    <property type="entry name" value="RHOD_YceA"/>
    <property type="match status" value="1"/>
</dbReference>
<dbReference type="Gene3D" id="3.30.70.100">
    <property type="match status" value="1"/>
</dbReference>
<dbReference type="Gene3D" id="3.40.250.10">
    <property type="entry name" value="Rhodanese-like domain"/>
    <property type="match status" value="1"/>
</dbReference>
<dbReference type="HAMAP" id="MF_00469">
    <property type="entry name" value="TrhO"/>
    <property type="match status" value="1"/>
</dbReference>
<dbReference type="InterPro" id="IPR001763">
    <property type="entry name" value="Rhodanese-like_dom"/>
</dbReference>
<dbReference type="InterPro" id="IPR036873">
    <property type="entry name" value="Rhodanese-like_dom_sf"/>
</dbReference>
<dbReference type="InterPro" id="IPR022111">
    <property type="entry name" value="Rhodanese_C"/>
</dbReference>
<dbReference type="InterPro" id="IPR020936">
    <property type="entry name" value="TrhO"/>
</dbReference>
<dbReference type="InterPro" id="IPR040503">
    <property type="entry name" value="TRHO_N"/>
</dbReference>
<dbReference type="NCBIfam" id="NF001133">
    <property type="entry name" value="PRK00142.1-1"/>
    <property type="match status" value="1"/>
</dbReference>
<dbReference type="PANTHER" id="PTHR43846:SF1">
    <property type="entry name" value="TRNA URIDINE(34) HYDROXYLASE"/>
    <property type="match status" value="1"/>
</dbReference>
<dbReference type="PANTHER" id="PTHR43846">
    <property type="entry name" value="UPF0176 PROTEIN YCEA"/>
    <property type="match status" value="1"/>
</dbReference>
<dbReference type="Pfam" id="PF00581">
    <property type="entry name" value="Rhodanese"/>
    <property type="match status" value="1"/>
</dbReference>
<dbReference type="Pfam" id="PF12368">
    <property type="entry name" value="Rhodanese_C"/>
    <property type="match status" value="1"/>
</dbReference>
<dbReference type="Pfam" id="PF17773">
    <property type="entry name" value="UPF0176_N"/>
    <property type="match status" value="1"/>
</dbReference>
<dbReference type="SMART" id="SM00450">
    <property type="entry name" value="RHOD"/>
    <property type="match status" value="1"/>
</dbReference>
<dbReference type="SUPFAM" id="SSF52821">
    <property type="entry name" value="Rhodanese/Cell cycle control phosphatase"/>
    <property type="match status" value="1"/>
</dbReference>
<dbReference type="PROSITE" id="PS50206">
    <property type="entry name" value="RHODANESE_3"/>
    <property type="match status" value="1"/>
</dbReference>
<protein>
    <recommendedName>
        <fullName evidence="2">tRNA uridine(34) hydroxylase</fullName>
        <ecNumber evidence="2">1.14.-.-</ecNumber>
    </recommendedName>
    <alternativeName>
        <fullName evidence="2">tRNA hydroxylation protein O</fullName>
    </alternativeName>
</protein>
<organism>
    <name type="scientific">Escherichia coli O127:H6 (strain E2348/69 / EPEC)</name>
    <dbReference type="NCBI Taxonomy" id="574521"/>
    <lineage>
        <taxon>Bacteria</taxon>
        <taxon>Pseudomonadati</taxon>
        <taxon>Pseudomonadota</taxon>
        <taxon>Gammaproteobacteria</taxon>
        <taxon>Enterobacterales</taxon>
        <taxon>Enterobacteriaceae</taxon>
        <taxon>Escherichia</taxon>
    </lineage>
</organism>
<sequence length="350" mass="39794">MPVLHNRISNDALKAKMLAESEPRITISFYKYFHIADPKATRDALYQLFTALDVFGRVYLAHEGINAQISVPASNVETFRAQLYAFDPALEGLRLNIALDDDGKSFWVLRMKVRDRIVSDGIDDPHFDASNVGEYLQAAEVNAMLDDPDALFIDMRNHYEYEVGHFENALEIPADTFREQLPKAVEMMQAHKDKKIVMYCTGGIRCEKASAWMKHNGFNKVWHIEGGIIEYARKAREQGLPVRFIGKNFVFDERMGERISDEIIAHCHQCGAPCDSHTNCKNDGCHLLFIQCPVCAEKYKGCCSEICCEESALPPEEQRRRRAGRENSNKIFNKSRGRLNTTLGIPDPTE</sequence>
<proteinExistence type="inferred from homology"/>
<reference key="1">
    <citation type="journal article" date="2009" name="J. Bacteriol.">
        <title>Complete genome sequence and comparative genome analysis of enteropathogenic Escherichia coli O127:H6 strain E2348/69.</title>
        <authorList>
            <person name="Iguchi A."/>
            <person name="Thomson N.R."/>
            <person name="Ogura Y."/>
            <person name="Saunders D."/>
            <person name="Ooka T."/>
            <person name="Henderson I.R."/>
            <person name="Harris D."/>
            <person name="Asadulghani M."/>
            <person name="Kurokawa K."/>
            <person name="Dean P."/>
            <person name="Kenny B."/>
            <person name="Quail M.A."/>
            <person name="Thurston S."/>
            <person name="Dougan G."/>
            <person name="Hayashi T."/>
            <person name="Parkhill J."/>
            <person name="Frankel G."/>
        </authorList>
    </citation>
    <scope>NUCLEOTIDE SEQUENCE [LARGE SCALE GENOMIC DNA]</scope>
    <source>
        <strain>E2348/69 / EPEC</strain>
    </source>
</reference>